<organism>
    <name type="scientific">Haemophilus influenzae (strain PittEE)</name>
    <dbReference type="NCBI Taxonomy" id="374930"/>
    <lineage>
        <taxon>Bacteria</taxon>
        <taxon>Pseudomonadati</taxon>
        <taxon>Pseudomonadota</taxon>
        <taxon>Gammaproteobacteria</taxon>
        <taxon>Pasteurellales</taxon>
        <taxon>Pasteurellaceae</taxon>
        <taxon>Haemophilus</taxon>
    </lineage>
</organism>
<name>RS15_HAEIE</name>
<proteinExistence type="inferred from homology"/>
<keyword id="KW-0687">Ribonucleoprotein</keyword>
<keyword id="KW-0689">Ribosomal protein</keyword>
<keyword id="KW-0694">RNA-binding</keyword>
<keyword id="KW-0699">rRNA-binding</keyword>
<accession>A5UC84</accession>
<reference key="1">
    <citation type="journal article" date="2007" name="Genome Biol.">
        <title>Characterization and modeling of the Haemophilus influenzae core and supragenomes based on the complete genomic sequences of Rd and 12 clinical nontypeable strains.</title>
        <authorList>
            <person name="Hogg J.S."/>
            <person name="Hu F.Z."/>
            <person name="Janto B."/>
            <person name="Boissy R."/>
            <person name="Hayes J."/>
            <person name="Keefe R."/>
            <person name="Post J.C."/>
            <person name="Ehrlich G.D."/>
        </authorList>
    </citation>
    <scope>NUCLEOTIDE SEQUENCE [LARGE SCALE GENOMIC DNA]</scope>
    <source>
        <strain>PittEE</strain>
    </source>
</reference>
<evidence type="ECO:0000255" key="1">
    <source>
        <dbReference type="HAMAP-Rule" id="MF_01343"/>
    </source>
</evidence>
<evidence type="ECO:0000305" key="2"/>
<feature type="chain" id="PRO_0000354200" description="Small ribosomal subunit protein uS15">
    <location>
        <begin position="1"/>
        <end position="113"/>
    </location>
</feature>
<dbReference type="EMBL" id="CP000671">
    <property type="protein sequence ID" value="ABQ98385.1"/>
    <property type="molecule type" value="Genomic_DNA"/>
</dbReference>
<dbReference type="SMR" id="A5UC84"/>
<dbReference type="KEGG" id="hip:CGSHiEE_04970"/>
<dbReference type="HOGENOM" id="CLU_148518_0_0_6"/>
<dbReference type="GO" id="GO:0022627">
    <property type="term" value="C:cytosolic small ribosomal subunit"/>
    <property type="evidence" value="ECO:0007669"/>
    <property type="project" value="TreeGrafter"/>
</dbReference>
<dbReference type="GO" id="GO:0019843">
    <property type="term" value="F:rRNA binding"/>
    <property type="evidence" value="ECO:0007669"/>
    <property type="project" value="UniProtKB-UniRule"/>
</dbReference>
<dbReference type="GO" id="GO:0003735">
    <property type="term" value="F:structural constituent of ribosome"/>
    <property type="evidence" value="ECO:0007669"/>
    <property type="project" value="InterPro"/>
</dbReference>
<dbReference type="GO" id="GO:0006412">
    <property type="term" value="P:translation"/>
    <property type="evidence" value="ECO:0007669"/>
    <property type="project" value="UniProtKB-UniRule"/>
</dbReference>
<dbReference type="CDD" id="cd00353">
    <property type="entry name" value="Ribosomal_S15p_S13e"/>
    <property type="match status" value="1"/>
</dbReference>
<dbReference type="FunFam" id="1.10.287.10:FF:000002">
    <property type="entry name" value="30S ribosomal protein S15"/>
    <property type="match status" value="1"/>
</dbReference>
<dbReference type="Gene3D" id="6.10.250.3130">
    <property type="match status" value="1"/>
</dbReference>
<dbReference type="Gene3D" id="1.10.287.10">
    <property type="entry name" value="S15/NS1, RNA-binding"/>
    <property type="match status" value="1"/>
</dbReference>
<dbReference type="HAMAP" id="MF_01343_B">
    <property type="entry name" value="Ribosomal_uS15_B"/>
    <property type="match status" value="1"/>
</dbReference>
<dbReference type="InterPro" id="IPR000589">
    <property type="entry name" value="Ribosomal_uS15"/>
</dbReference>
<dbReference type="InterPro" id="IPR005290">
    <property type="entry name" value="Ribosomal_uS15_bac-type"/>
</dbReference>
<dbReference type="InterPro" id="IPR009068">
    <property type="entry name" value="uS15_NS1_RNA-bd_sf"/>
</dbReference>
<dbReference type="NCBIfam" id="TIGR00952">
    <property type="entry name" value="S15_bact"/>
    <property type="match status" value="1"/>
</dbReference>
<dbReference type="PANTHER" id="PTHR23321">
    <property type="entry name" value="RIBOSOMAL PROTEIN S15, BACTERIAL AND ORGANELLAR"/>
    <property type="match status" value="1"/>
</dbReference>
<dbReference type="PANTHER" id="PTHR23321:SF26">
    <property type="entry name" value="SMALL RIBOSOMAL SUBUNIT PROTEIN US15M"/>
    <property type="match status" value="1"/>
</dbReference>
<dbReference type="Pfam" id="PF00312">
    <property type="entry name" value="Ribosomal_S15"/>
    <property type="match status" value="1"/>
</dbReference>
<dbReference type="SMART" id="SM01387">
    <property type="entry name" value="Ribosomal_S15"/>
    <property type="match status" value="1"/>
</dbReference>
<dbReference type="SUPFAM" id="SSF47060">
    <property type="entry name" value="S15/NS1 RNA-binding domain"/>
    <property type="match status" value="1"/>
</dbReference>
<dbReference type="PROSITE" id="PS00362">
    <property type="entry name" value="RIBOSOMAL_S15"/>
    <property type="match status" value="1"/>
</dbReference>
<gene>
    <name evidence="1" type="primary">rpsO</name>
    <name type="ordered locus">CGSHiEE_04970</name>
</gene>
<sequence>MSLSTEKKAAIVAEFGRDAKDTGSSEVQIALLTAQINHLQAHFAEHKKDHHGRRGLLRMVSRRRKLLDYLKRTDLALYQSTIARLGLRRLIFYYDSKKSSPRILRAFLWGCTR</sequence>
<protein>
    <recommendedName>
        <fullName evidence="1">Small ribosomal subunit protein uS15</fullName>
    </recommendedName>
    <alternativeName>
        <fullName evidence="2">30S ribosomal protein S15</fullName>
    </alternativeName>
</protein>
<comment type="function">
    <text evidence="1">One of the primary rRNA binding proteins, it binds directly to 16S rRNA where it helps nucleate assembly of the platform of the 30S subunit by binding and bridging several RNA helices of the 16S rRNA.</text>
</comment>
<comment type="function">
    <text evidence="1">Forms an intersubunit bridge (bridge B4) with the 23S rRNA of the 50S subunit in the ribosome.</text>
</comment>
<comment type="subunit">
    <text evidence="1">Part of the 30S ribosomal subunit. Forms a bridge to the 50S subunit in the 70S ribosome, contacting the 23S rRNA.</text>
</comment>
<comment type="similarity">
    <text evidence="1">Belongs to the universal ribosomal protein uS15 family.</text>
</comment>